<gene>
    <name evidence="1" type="primary">rsxB</name>
    <name type="ordered locus">ECIAI1_1680</name>
</gene>
<name>RSXB_ECO8A</name>
<protein>
    <recommendedName>
        <fullName evidence="1">Ion-translocating oxidoreductase complex subunit B</fullName>
        <ecNumber evidence="1">7.-.-.-</ecNumber>
    </recommendedName>
    <alternativeName>
        <fullName evidence="1">Rsx electron transport complex subunit B</fullName>
    </alternativeName>
</protein>
<keyword id="KW-0004">4Fe-4S</keyword>
<keyword id="KW-0997">Cell inner membrane</keyword>
<keyword id="KW-1003">Cell membrane</keyword>
<keyword id="KW-0249">Electron transport</keyword>
<keyword id="KW-0408">Iron</keyword>
<keyword id="KW-0411">Iron-sulfur</keyword>
<keyword id="KW-0472">Membrane</keyword>
<keyword id="KW-0479">Metal-binding</keyword>
<keyword id="KW-0677">Repeat</keyword>
<keyword id="KW-1278">Translocase</keyword>
<keyword id="KW-0813">Transport</keyword>
<dbReference type="EC" id="7.-.-.-" evidence="1"/>
<dbReference type="EMBL" id="CU928160">
    <property type="protein sequence ID" value="CAQ98537.1"/>
    <property type="molecule type" value="Genomic_DNA"/>
</dbReference>
<dbReference type="RefSeq" id="WP_000991805.1">
    <property type="nucleotide sequence ID" value="NC_011741.1"/>
</dbReference>
<dbReference type="KEGG" id="ecr:ECIAI1_1680"/>
<dbReference type="HOGENOM" id="CLU_063448_2_0_6"/>
<dbReference type="GO" id="GO:0005886">
    <property type="term" value="C:plasma membrane"/>
    <property type="evidence" value="ECO:0007669"/>
    <property type="project" value="UniProtKB-SubCell"/>
</dbReference>
<dbReference type="GO" id="GO:0051539">
    <property type="term" value="F:4 iron, 4 sulfur cluster binding"/>
    <property type="evidence" value="ECO:0007669"/>
    <property type="project" value="UniProtKB-UniRule"/>
</dbReference>
<dbReference type="GO" id="GO:0009055">
    <property type="term" value="F:electron transfer activity"/>
    <property type="evidence" value="ECO:0007669"/>
    <property type="project" value="InterPro"/>
</dbReference>
<dbReference type="GO" id="GO:0046872">
    <property type="term" value="F:metal ion binding"/>
    <property type="evidence" value="ECO:0007669"/>
    <property type="project" value="UniProtKB-KW"/>
</dbReference>
<dbReference type="GO" id="GO:0022900">
    <property type="term" value="P:electron transport chain"/>
    <property type="evidence" value="ECO:0007669"/>
    <property type="project" value="UniProtKB-UniRule"/>
</dbReference>
<dbReference type="FunFam" id="1.10.15.40:FF:000001">
    <property type="entry name" value="Ion-translocating oxidoreductase complex subunit B"/>
    <property type="match status" value="1"/>
</dbReference>
<dbReference type="Gene3D" id="3.30.70.20">
    <property type="match status" value="1"/>
</dbReference>
<dbReference type="Gene3D" id="1.10.15.40">
    <property type="entry name" value="Electron transport complex subunit B, putative Fe-S cluster"/>
    <property type="match status" value="1"/>
</dbReference>
<dbReference type="HAMAP" id="MF_00463">
    <property type="entry name" value="RsxB_RnfB"/>
    <property type="match status" value="1"/>
</dbReference>
<dbReference type="InterPro" id="IPR007202">
    <property type="entry name" value="4Fe-4S_dom"/>
</dbReference>
<dbReference type="InterPro" id="IPR017896">
    <property type="entry name" value="4Fe4S_Fe-S-bd"/>
</dbReference>
<dbReference type="InterPro" id="IPR017900">
    <property type="entry name" value="4Fe4S_Fe_S_CS"/>
</dbReference>
<dbReference type="InterPro" id="IPR050395">
    <property type="entry name" value="4Fe4S_Ferredoxin_RnfB"/>
</dbReference>
<dbReference type="InterPro" id="IPR010207">
    <property type="entry name" value="Elect_transpt_cplx_RnfB/RsxB"/>
</dbReference>
<dbReference type="InterPro" id="IPR016463">
    <property type="entry name" value="RnfB/RsxB_Proteobac"/>
</dbReference>
<dbReference type="NCBIfam" id="NF003475">
    <property type="entry name" value="PRK05113.1"/>
    <property type="match status" value="1"/>
</dbReference>
<dbReference type="NCBIfam" id="TIGR01944">
    <property type="entry name" value="rnfB"/>
    <property type="match status" value="1"/>
</dbReference>
<dbReference type="PANTHER" id="PTHR43560">
    <property type="entry name" value="ION-TRANSLOCATING OXIDOREDUCTASE COMPLEX SUBUNIT B"/>
    <property type="match status" value="1"/>
</dbReference>
<dbReference type="PANTHER" id="PTHR43560:SF1">
    <property type="entry name" value="ION-TRANSLOCATING OXIDOREDUCTASE COMPLEX SUBUNIT B"/>
    <property type="match status" value="1"/>
</dbReference>
<dbReference type="Pfam" id="PF14697">
    <property type="entry name" value="Fer4_21"/>
    <property type="match status" value="1"/>
</dbReference>
<dbReference type="Pfam" id="PF04060">
    <property type="entry name" value="FeS"/>
    <property type="match status" value="1"/>
</dbReference>
<dbReference type="PIRSF" id="PIRSF005784">
    <property type="entry name" value="Elect_transpt_RnfB"/>
    <property type="match status" value="1"/>
</dbReference>
<dbReference type="SUPFAM" id="SSF54862">
    <property type="entry name" value="4Fe-4S ferredoxins"/>
    <property type="match status" value="1"/>
</dbReference>
<dbReference type="PROSITE" id="PS51656">
    <property type="entry name" value="4FE4S"/>
    <property type="match status" value="1"/>
</dbReference>
<dbReference type="PROSITE" id="PS00198">
    <property type="entry name" value="4FE4S_FER_1"/>
    <property type="match status" value="2"/>
</dbReference>
<dbReference type="PROSITE" id="PS51379">
    <property type="entry name" value="4FE4S_FER_2"/>
    <property type="match status" value="2"/>
</dbReference>
<feature type="chain" id="PRO_1000194483" description="Ion-translocating oxidoreductase complex subunit B">
    <location>
        <begin position="1"/>
        <end position="192"/>
    </location>
</feature>
<feature type="domain" description="4Fe-4S" evidence="1">
    <location>
        <begin position="32"/>
        <end position="91"/>
    </location>
</feature>
<feature type="domain" description="4Fe-4S ferredoxin-type 1" evidence="1">
    <location>
        <begin position="108"/>
        <end position="137"/>
    </location>
</feature>
<feature type="domain" description="4Fe-4S ferredoxin-type 2" evidence="1">
    <location>
        <begin position="138"/>
        <end position="167"/>
    </location>
</feature>
<feature type="region of interest" description="Hydrophobic" evidence="1">
    <location>
        <begin position="1"/>
        <end position="26"/>
    </location>
</feature>
<feature type="binding site" evidence="1">
    <location>
        <position position="49"/>
    </location>
    <ligand>
        <name>[4Fe-4S] cluster</name>
        <dbReference type="ChEBI" id="CHEBI:49883"/>
        <label>1</label>
    </ligand>
</feature>
<feature type="binding site" evidence="1">
    <location>
        <position position="52"/>
    </location>
    <ligand>
        <name>[4Fe-4S] cluster</name>
        <dbReference type="ChEBI" id="CHEBI:49883"/>
        <label>1</label>
    </ligand>
</feature>
<feature type="binding site" evidence="1">
    <location>
        <position position="57"/>
    </location>
    <ligand>
        <name>[4Fe-4S] cluster</name>
        <dbReference type="ChEBI" id="CHEBI:49883"/>
        <label>1</label>
    </ligand>
</feature>
<feature type="binding site" evidence="1">
    <location>
        <position position="74"/>
    </location>
    <ligand>
        <name>[4Fe-4S] cluster</name>
        <dbReference type="ChEBI" id="CHEBI:49883"/>
        <label>1</label>
    </ligand>
</feature>
<feature type="binding site" evidence="1">
    <location>
        <position position="117"/>
    </location>
    <ligand>
        <name>[4Fe-4S] cluster</name>
        <dbReference type="ChEBI" id="CHEBI:49883"/>
        <label>2</label>
    </ligand>
</feature>
<feature type="binding site" evidence="1">
    <location>
        <position position="120"/>
    </location>
    <ligand>
        <name>[4Fe-4S] cluster</name>
        <dbReference type="ChEBI" id="CHEBI:49883"/>
        <label>2</label>
    </ligand>
</feature>
<feature type="binding site" evidence="1">
    <location>
        <position position="123"/>
    </location>
    <ligand>
        <name>[4Fe-4S] cluster</name>
        <dbReference type="ChEBI" id="CHEBI:49883"/>
        <label>2</label>
    </ligand>
</feature>
<feature type="binding site" evidence="1">
    <location>
        <position position="127"/>
    </location>
    <ligand>
        <name>[4Fe-4S] cluster</name>
        <dbReference type="ChEBI" id="CHEBI:49883"/>
        <label>3</label>
    </ligand>
</feature>
<feature type="binding site" evidence="1">
    <location>
        <position position="147"/>
    </location>
    <ligand>
        <name>[4Fe-4S] cluster</name>
        <dbReference type="ChEBI" id="CHEBI:49883"/>
        <label>3</label>
    </ligand>
</feature>
<feature type="binding site" evidence="1">
    <location>
        <position position="150"/>
    </location>
    <ligand>
        <name>[4Fe-4S] cluster</name>
        <dbReference type="ChEBI" id="CHEBI:49883"/>
        <label>3</label>
    </ligand>
</feature>
<feature type="binding site" evidence="1">
    <location>
        <position position="153"/>
    </location>
    <ligand>
        <name>[4Fe-4S] cluster</name>
        <dbReference type="ChEBI" id="CHEBI:49883"/>
        <label>3</label>
    </ligand>
</feature>
<feature type="binding site" evidence="1">
    <location>
        <position position="157"/>
    </location>
    <ligand>
        <name>[4Fe-4S] cluster</name>
        <dbReference type="ChEBI" id="CHEBI:49883"/>
        <label>2</label>
    </ligand>
</feature>
<organism>
    <name type="scientific">Escherichia coli O8 (strain IAI1)</name>
    <dbReference type="NCBI Taxonomy" id="585034"/>
    <lineage>
        <taxon>Bacteria</taxon>
        <taxon>Pseudomonadati</taxon>
        <taxon>Pseudomonadota</taxon>
        <taxon>Gammaproteobacteria</taxon>
        <taxon>Enterobacterales</taxon>
        <taxon>Enterobacteriaceae</taxon>
        <taxon>Escherichia</taxon>
    </lineage>
</organism>
<accession>B7M0I5</accession>
<comment type="function">
    <text evidence="1">Part of a membrane-bound complex that couples electron transfer with translocation of ions across the membrane. Required to maintain the reduced state of SoxR.</text>
</comment>
<comment type="cofactor">
    <cofactor evidence="1">
        <name>[4Fe-4S] cluster</name>
        <dbReference type="ChEBI" id="CHEBI:49883"/>
    </cofactor>
    <text evidence="1">Binds 3 [4Fe-4S] clusters.</text>
</comment>
<comment type="subunit">
    <text evidence="1">The complex is composed of six subunits: RsxA, RsxB, RsxC, RsxD, RsxE and RsxG.</text>
</comment>
<comment type="subcellular location">
    <subcellularLocation>
        <location evidence="1">Cell inner membrane</location>
    </subcellularLocation>
</comment>
<comment type="similarity">
    <text evidence="1">Belongs to the 4Fe4S bacterial-type ferredoxin family. RnfB subfamily.</text>
</comment>
<reference key="1">
    <citation type="journal article" date="2009" name="PLoS Genet.">
        <title>Organised genome dynamics in the Escherichia coli species results in highly diverse adaptive paths.</title>
        <authorList>
            <person name="Touchon M."/>
            <person name="Hoede C."/>
            <person name="Tenaillon O."/>
            <person name="Barbe V."/>
            <person name="Baeriswyl S."/>
            <person name="Bidet P."/>
            <person name="Bingen E."/>
            <person name="Bonacorsi S."/>
            <person name="Bouchier C."/>
            <person name="Bouvet O."/>
            <person name="Calteau A."/>
            <person name="Chiapello H."/>
            <person name="Clermont O."/>
            <person name="Cruveiller S."/>
            <person name="Danchin A."/>
            <person name="Diard M."/>
            <person name="Dossat C."/>
            <person name="Karoui M.E."/>
            <person name="Frapy E."/>
            <person name="Garry L."/>
            <person name="Ghigo J.M."/>
            <person name="Gilles A.M."/>
            <person name="Johnson J."/>
            <person name="Le Bouguenec C."/>
            <person name="Lescat M."/>
            <person name="Mangenot S."/>
            <person name="Martinez-Jehanne V."/>
            <person name="Matic I."/>
            <person name="Nassif X."/>
            <person name="Oztas S."/>
            <person name="Petit M.A."/>
            <person name="Pichon C."/>
            <person name="Rouy Z."/>
            <person name="Ruf C.S."/>
            <person name="Schneider D."/>
            <person name="Tourret J."/>
            <person name="Vacherie B."/>
            <person name="Vallenet D."/>
            <person name="Medigue C."/>
            <person name="Rocha E.P.C."/>
            <person name="Denamur E."/>
        </authorList>
    </citation>
    <scope>NUCLEOTIDE SEQUENCE [LARGE SCALE GENOMIC DNA]</scope>
    <source>
        <strain>IAI1</strain>
    </source>
</reference>
<sequence length="192" mass="20544">MNAIWIAVAAVSLLGLAFGAILGYASRRFAVEDDPVVEKIDEILPQSQCGQCGYPGCRPYAEAISCNGEKINRCAPGGEAVMLKIAELLNVEPQPLDGEAQEITPARMVAVIDENNCIGCTKCIQACPVDAIVGATRAMHTVMSDLCTGCNLCVDPCPTHCISLQPVAETPDSWKWDLNTIPVRIIPVEHHA</sequence>
<proteinExistence type="inferred from homology"/>
<evidence type="ECO:0000255" key="1">
    <source>
        <dbReference type="HAMAP-Rule" id="MF_00463"/>
    </source>
</evidence>